<comment type="function">
    <text evidence="1">Part of a stress-induced multi-chaperone system, it is involved in the recovery of the cell from heat-induced damage, in cooperation with DnaK, DnaJ and GrpE. Acts before DnaK, in the processing of protein aggregates. Protein binding stimulates the ATPase activity; ATP hydrolysis unfolds the denatured protein aggregates, which probably helps expose new hydrophobic binding sites on the surface of ClpB-bound aggregates, contributing to the solubilization and refolding of denatured protein aggregates by DnaK (By similarity).</text>
</comment>
<comment type="subunit">
    <text evidence="1">Homohexamer. The oligomerization is ATP-dependent (By similarity).</text>
</comment>
<comment type="subcellular location">
    <subcellularLocation>
        <location evidence="3">Cytoplasm</location>
    </subcellularLocation>
</comment>
<comment type="domain">
    <text evidence="1">The Clp repeat (R) domain probably functions as a substrate-discriminating domain, recruiting aggregated proteins to the ClpB hexamer and/or stabilizing bound proteins. The NBD2 domain is responsible for oligomerization, whereas the NBD1 domain stabilizes the hexamer probably in an ATP-dependent manner. The movement of the coiled-coil domain is essential for ClpB ability to rescue proteins from an aggregated state, probably by pulling apart large aggregated proteins, which are bound between the coiled-coils motifs of adjacent ClpB subunits in the functional hexamer (By similarity).</text>
</comment>
<comment type="similarity">
    <text evidence="3">Belongs to the ClpA/ClpB family.</text>
</comment>
<protein>
    <recommendedName>
        <fullName>Chaperone protein ClpB</fullName>
    </recommendedName>
</protein>
<accession>Q9PI02</accession>
<accession>Q0PB06</accession>
<keyword id="KW-0067">ATP-binding</keyword>
<keyword id="KW-0143">Chaperone</keyword>
<keyword id="KW-0175">Coiled coil</keyword>
<keyword id="KW-0963">Cytoplasm</keyword>
<keyword id="KW-0547">Nucleotide-binding</keyword>
<keyword id="KW-1185">Reference proteome</keyword>
<keyword id="KW-0677">Repeat</keyword>
<keyword id="KW-0346">Stress response</keyword>
<organism>
    <name type="scientific">Campylobacter jejuni subsp. jejuni serotype O:2 (strain ATCC 700819 / NCTC 11168)</name>
    <dbReference type="NCBI Taxonomy" id="192222"/>
    <lineage>
        <taxon>Bacteria</taxon>
        <taxon>Pseudomonadati</taxon>
        <taxon>Campylobacterota</taxon>
        <taxon>Epsilonproteobacteria</taxon>
        <taxon>Campylobacterales</taxon>
        <taxon>Campylobacteraceae</taxon>
        <taxon>Campylobacter</taxon>
    </lineage>
</organism>
<feature type="chain" id="PRO_0000191101" description="Chaperone protein ClpB">
    <location>
        <begin position="1"/>
        <end position="857"/>
    </location>
</feature>
<feature type="domain" description="Clp R" evidence="2">
    <location>
        <begin position="4"/>
        <end position="147"/>
    </location>
</feature>
<feature type="region of interest" description="Repeat 1" evidence="2">
    <location>
        <begin position="8"/>
        <end position="73"/>
    </location>
</feature>
<feature type="region of interest" description="Repeat 2" evidence="2">
    <location>
        <begin position="86"/>
        <end position="147"/>
    </location>
</feature>
<feature type="region of interest" description="NBD1" evidence="1">
    <location>
        <begin position="160"/>
        <end position="340"/>
    </location>
</feature>
<feature type="region of interest" description="Linker" evidence="1">
    <location>
        <begin position="341"/>
        <end position="548"/>
    </location>
</feature>
<feature type="region of interest" description="NBD2" evidence="1">
    <location>
        <begin position="558"/>
        <end position="764"/>
    </location>
</feature>
<feature type="region of interest" description="C-terminal" evidence="1">
    <location>
        <begin position="765"/>
        <end position="857"/>
    </location>
</feature>
<feature type="coiled-coil region" evidence="1">
    <location>
        <begin position="391"/>
        <end position="525"/>
    </location>
</feature>
<feature type="binding site" evidence="1">
    <location>
        <begin position="207"/>
        <end position="214"/>
    </location>
    <ligand>
        <name>ATP</name>
        <dbReference type="ChEBI" id="CHEBI:30616"/>
        <label>1</label>
    </ligand>
</feature>
<feature type="binding site" evidence="1">
    <location>
        <begin position="608"/>
        <end position="615"/>
    </location>
    <ligand>
        <name>ATP</name>
        <dbReference type="ChEBI" id="CHEBI:30616"/>
        <label>2</label>
    </ligand>
</feature>
<proteinExistence type="inferred from homology"/>
<gene>
    <name type="primary">clpB</name>
    <name type="ordered locus">Cj0509c</name>
</gene>
<reference key="1">
    <citation type="journal article" date="2000" name="Nature">
        <title>The genome sequence of the food-borne pathogen Campylobacter jejuni reveals hypervariable sequences.</title>
        <authorList>
            <person name="Parkhill J."/>
            <person name="Wren B.W."/>
            <person name="Mungall K.L."/>
            <person name="Ketley J.M."/>
            <person name="Churcher C.M."/>
            <person name="Basham D."/>
            <person name="Chillingworth T."/>
            <person name="Davies R.M."/>
            <person name="Feltwell T."/>
            <person name="Holroyd S."/>
            <person name="Jagels K."/>
            <person name="Karlyshev A.V."/>
            <person name="Moule S."/>
            <person name="Pallen M.J."/>
            <person name="Penn C.W."/>
            <person name="Quail M.A."/>
            <person name="Rajandream M.A."/>
            <person name="Rutherford K.M."/>
            <person name="van Vliet A.H.M."/>
            <person name="Whitehead S."/>
            <person name="Barrell B.G."/>
        </authorList>
    </citation>
    <scope>NUCLEOTIDE SEQUENCE [LARGE SCALE GENOMIC DNA]</scope>
    <source>
        <strain>ATCC 700819 / NCTC 11168</strain>
    </source>
</reference>
<sequence>MANIQDFLTDNMLSNLESAASLAIHSKNNEVVPLHLLWALSVDSTSILNQILNKLNISKEALELEIKSRISKLATSSNVNRENIRFSNELINSLENAKGLMSANGDSYLSVDTWLISESQKSPIKEILAQFLDLREFQKELESLRAGRKMDSKTSDETLDSLNKFGIDLTLKASEGKLDPVIGREEEIERLMQILIRKTKNNPILLGEPGVGKTAIVEALAQRIIKKDVPKSLQNKKVIALDMSALIAGAKYRGEFEDRLKAVVNEVIKSENIILFIDEIHTIVGAGASEGSMDAANILKPALARGELHTIGATTLKEYRKYFEKDAALQRRFQPVNVGEPSVNEALAMLRGIKEKLEIHHNVTINDSALVAAAKLSKRYIADRFLPDKAIDLIDEAAAELKMQIESEPSSLRKVRKDIETLEVENEALKMENDEKNQKRLDEIAKELANLKEKQNALNSQFENEKSVFDGISAKKKEIDLLKNEASLAKARGEFQKAAELEYGKIPSLEKEVEILEDKWKKMSENGVLLKNQVDEDLVAGILSKWTGISVQKMLTSEKQKFLEVEKHLKESVIGQDKALSALARAIKRNKAGLNADNKPIGSFLFLGPTGVGKTQSAKALAKFLFDDEKAMIRFDMSEFMEKHSVSRLLGAPPGYIGHEEGGELTEAVRRKPYSVLLFDEVEKAHKDVFNVLLGILDDGRATDSKGVTVDFKNTIIILTSNIASNAIMNLSGKEQEDAVKNELKNFFKPEFLNRLDDIITFNPLGKDEAYEIVKLLFKDLQMSLENKGIKASLSENAALLIAKDGFDPDFGARPLRRAIYDLIEDKLSDMILADELHENDSIIIDAKDDEIIIKKA</sequence>
<name>CLPB_CAMJE</name>
<dbReference type="EMBL" id="AL111168">
    <property type="protein sequence ID" value="CAL34656.1"/>
    <property type="molecule type" value="Genomic_DNA"/>
</dbReference>
<dbReference type="PIR" id="F81396">
    <property type="entry name" value="F81396"/>
</dbReference>
<dbReference type="RefSeq" id="WP_002858618.1">
    <property type="nucleotide sequence ID" value="NZ_SZUC01000002.1"/>
</dbReference>
<dbReference type="RefSeq" id="YP_002343941.1">
    <property type="nucleotide sequence ID" value="NC_002163.1"/>
</dbReference>
<dbReference type="SMR" id="Q9PI02"/>
<dbReference type="IntAct" id="Q9PI02">
    <property type="interactions" value="1"/>
</dbReference>
<dbReference type="STRING" id="192222.Cj0509c"/>
<dbReference type="PaxDb" id="192222-Cj0509c"/>
<dbReference type="EnsemblBacteria" id="CAL34656">
    <property type="protein sequence ID" value="CAL34656"/>
    <property type="gene ID" value="Cj0509c"/>
</dbReference>
<dbReference type="GeneID" id="904838"/>
<dbReference type="KEGG" id="cje:Cj0509c"/>
<dbReference type="PATRIC" id="fig|192222.6.peg.502"/>
<dbReference type="eggNOG" id="COG0542">
    <property type="taxonomic scope" value="Bacteria"/>
</dbReference>
<dbReference type="HOGENOM" id="CLU_005070_4_0_7"/>
<dbReference type="OrthoDB" id="9803641at2"/>
<dbReference type="Proteomes" id="UP000000799">
    <property type="component" value="Chromosome"/>
</dbReference>
<dbReference type="GO" id="GO:0005737">
    <property type="term" value="C:cytoplasm"/>
    <property type="evidence" value="ECO:0007669"/>
    <property type="project" value="UniProtKB-SubCell"/>
</dbReference>
<dbReference type="GO" id="GO:0005524">
    <property type="term" value="F:ATP binding"/>
    <property type="evidence" value="ECO:0007669"/>
    <property type="project" value="UniProtKB-KW"/>
</dbReference>
<dbReference type="GO" id="GO:0016887">
    <property type="term" value="F:ATP hydrolysis activity"/>
    <property type="evidence" value="ECO:0007669"/>
    <property type="project" value="InterPro"/>
</dbReference>
<dbReference type="GO" id="GO:0034605">
    <property type="term" value="P:cellular response to heat"/>
    <property type="evidence" value="ECO:0007669"/>
    <property type="project" value="TreeGrafter"/>
</dbReference>
<dbReference type="CDD" id="cd00009">
    <property type="entry name" value="AAA"/>
    <property type="match status" value="1"/>
</dbReference>
<dbReference type="CDD" id="cd19499">
    <property type="entry name" value="RecA-like_ClpB_Hsp104-like"/>
    <property type="match status" value="1"/>
</dbReference>
<dbReference type="FunFam" id="3.40.50.300:FF:000120">
    <property type="entry name" value="ATP-dependent chaperone ClpB"/>
    <property type="match status" value="1"/>
</dbReference>
<dbReference type="FunFam" id="3.40.50.300:FF:000025">
    <property type="entry name" value="ATP-dependent Clp protease subunit"/>
    <property type="match status" value="1"/>
</dbReference>
<dbReference type="FunFam" id="3.40.50.300:FF:000010">
    <property type="entry name" value="Chaperone clpB 1, putative"/>
    <property type="match status" value="1"/>
</dbReference>
<dbReference type="Gene3D" id="1.10.8.60">
    <property type="match status" value="1"/>
</dbReference>
<dbReference type="Gene3D" id="1.10.1780.10">
    <property type="entry name" value="Clp, N-terminal domain"/>
    <property type="match status" value="1"/>
</dbReference>
<dbReference type="Gene3D" id="3.40.50.300">
    <property type="entry name" value="P-loop containing nucleotide triphosphate hydrolases"/>
    <property type="match status" value="3"/>
</dbReference>
<dbReference type="InterPro" id="IPR003593">
    <property type="entry name" value="AAA+_ATPase"/>
</dbReference>
<dbReference type="InterPro" id="IPR003959">
    <property type="entry name" value="ATPase_AAA_core"/>
</dbReference>
<dbReference type="InterPro" id="IPR019489">
    <property type="entry name" value="Clp_ATPase_C"/>
</dbReference>
<dbReference type="InterPro" id="IPR036628">
    <property type="entry name" value="Clp_N_dom_sf"/>
</dbReference>
<dbReference type="InterPro" id="IPR004176">
    <property type="entry name" value="Clp_R_dom"/>
</dbReference>
<dbReference type="InterPro" id="IPR001270">
    <property type="entry name" value="ClpA/B"/>
</dbReference>
<dbReference type="InterPro" id="IPR018368">
    <property type="entry name" value="ClpA/B_CS1"/>
</dbReference>
<dbReference type="InterPro" id="IPR028299">
    <property type="entry name" value="ClpA/B_CS2"/>
</dbReference>
<dbReference type="InterPro" id="IPR041546">
    <property type="entry name" value="ClpA/ClpB_AAA_lid"/>
</dbReference>
<dbReference type="InterPro" id="IPR050130">
    <property type="entry name" value="ClpA_ClpB"/>
</dbReference>
<dbReference type="InterPro" id="IPR027417">
    <property type="entry name" value="P-loop_NTPase"/>
</dbReference>
<dbReference type="PANTHER" id="PTHR11638">
    <property type="entry name" value="ATP-DEPENDENT CLP PROTEASE"/>
    <property type="match status" value="1"/>
</dbReference>
<dbReference type="PANTHER" id="PTHR11638:SF18">
    <property type="entry name" value="HEAT SHOCK PROTEIN 104"/>
    <property type="match status" value="1"/>
</dbReference>
<dbReference type="Pfam" id="PF00004">
    <property type="entry name" value="AAA"/>
    <property type="match status" value="1"/>
</dbReference>
<dbReference type="Pfam" id="PF07724">
    <property type="entry name" value="AAA_2"/>
    <property type="match status" value="1"/>
</dbReference>
<dbReference type="Pfam" id="PF17871">
    <property type="entry name" value="AAA_lid_9"/>
    <property type="match status" value="1"/>
</dbReference>
<dbReference type="Pfam" id="PF02861">
    <property type="entry name" value="Clp_N"/>
    <property type="match status" value="2"/>
</dbReference>
<dbReference type="Pfam" id="PF10431">
    <property type="entry name" value="ClpB_D2-small"/>
    <property type="match status" value="1"/>
</dbReference>
<dbReference type="PRINTS" id="PR00300">
    <property type="entry name" value="CLPPROTEASEA"/>
</dbReference>
<dbReference type="SMART" id="SM00382">
    <property type="entry name" value="AAA"/>
    <property type="match status" value="2"/>
</dbReference>
<dbReference type="SMART" id="SM01086">
    <property type="entry name" value="ClpB_D2-small"/>
    <property type="match status" value="1"/>
</dbReference>
<dbReference type="SUPFAM" id="SSF81923">
    <property type="entry name" value="Double Clp-N motif"/>
    <property type="match status" value="1"/>
</dbReference>
<dbReference type="SUPFAM" id="SSF52540">
    <property type="entry name" value="P-loop containing nucleoside triphosphate hydrolases"/>
    <property type="match status" value="2"/>
</dbReference>
<dbReference type="PROSITE" id="PS51903">
    <property type="entry name" value="CLP_R"/>
    <property type="match status" value="1"/>
</dbReference>
<dbReference type="PROSITE" id="PS00870">
    <property type="entry name" value="CLPAB_1"/>
    <property type="match status" value="1"/>
</dbReference>
<dbReference type="PROSITE" id="PS00871">
    <property type="entry name" value="CLPAB_2"/>
    <property type="match status" value="1"/>
</dbReference>
<evidence type="ECO:0000250" key="1"/>
<evidence type="ECO:0000255" key="2">
    <source>
        <dbReference type="PROSITE-ProRule" id="PRU01251"/>
    </source>
</evidence>
<evidence type="ECO:0000305" key="3"/>